<organism>
    <name type="scientific">Rhodopseudomonas palustris (strain ATCC BAA-98 / CGA009)</name>
    <dbReference type="NCBI Taxonomy" id="258594"/>
    <lineage>
        <taxon>Bacteria</taxon>
        <taxon>Pseudomonadati</taxon>
        <taxon>Pseudomonadota</taxon>
        <taxon>Alphaproteobacteria</taxon>
        <taxon>Hyphomicrobiales</taxon>
        <taxon>Nitrobacteraceae</taxon>
        <taxon>Rhodopseudomonas</taxon>
    </lineage>
</organism>
<evidence type="ECO:0000255" key="1"/>
<evidence type="ECO:0000269" key="2">
    <source>
    </source>
</evidence>
<evidence type="ECO:0000269" key="3">
    <source ref="2"/>
</evidence>
<evidence type="ECO:0000305" key="4"/>
<evidence type="ECO:0007829" key="5">
    <source>
        <dbReference type="PDB" id="7ZCU"/>
    </source>
</evidence>
<feature type="initiator methionine" description="Removed" evidence="2 3">
    <location>
        <position position="1"/>
    </location>
</feature>
<feature type="chain" id="PRO_0000099829" description="Light-harvesting protein B-800-850 beta chain A">
    <location>
        <begin position="2"/>
        <end position="47"/>
    </location>
</feature>
<feature type="topological domain" description="Cytoplasmic" evidence="1">
    <location>
        <begin position="2"/>
        <end position="19"/>
    </location>
</feature>
<feature type="transmembrane region" description="Helical" evidence="1">
    <location>
        <begin position="20"/>
        <end position="42"/>
    </location>
</feature>
<feature type="topological domain" description="Periplasmic" evidence="1">
    <location>
        <begin position="43"/>
        <end position="47"/>
    </location>
</feature>
<feature type="binding site" description="axial binding residue" evidence="1">
    <location>
        <position position="18"/>
    </location>
    <ligand>
        <name>a bacteriochlorophyll</name>
        <dbReference type="ChEBI" id="CHEBI:38201"/>
    </ligand>
    <ligandPart>
        <name>Mg</name>
        <dbReference type="ChEBI" id="CHEBI:25107"/>
    </ligandPart>
</feature>
<feature type="binding site" description="axial binding residue" evidence="1">
    <location>
        <position position="36"/>
    </location>
    <ligand>
        <name>a bacteriochlorophyll</name>
        <dbReference type="ChEBI" id="CHEBI:38201"/>
    </ligand>
    <ligandPart>
        <name>Mg</name>
        <dbReference type="ChEBI" id="CHEBI:25107"/>
    </ligandPart>
</feature>
<feature type="strand" evidence="5">
    <location>
        <begin position="6"/>
        <end position="8"/>
    </location>
</feature>
<feature type="helix" evidence="5">
    <location>
        <begin position="11"/>
        <end position="42"/>
    </location>
</feature>
<keyword id="KW-0002">3D-structure</keyword>
<keyword id="KW-0042">Antenna complex</keyword>
<keyword id="KW-0076">Bacteriochlorophyll</keyword>
<keyword id="KW-0997">Cell inner membrane</keyword>
<keyword id="KW-1003">Cell membrane</keyword>
<keyword id="KW-0148">Chlorophyll</keyword>
<keyword id="KW-0157">Chromophore</keyword>
<keyword id="KW-0903">Direct protein sequencing</keyword>
<keyword id="KW-0437">Light-harvesting polypeptide</keyword>
<keyword id="KW-0460">Magnesium</keyword>
<keyword id="KW-0472">Membrane</keyword>
<keyword id="KW-0479">Metal-binding</keyword>
<keyword id="KW-0812">Transmembrane</keyword>
<keyword id="KW-1133">Transmembrane helix</keyword>
<gene>
    <name type="primary">pucBA</name>
    <name type="ordered locus">RPA2654</name>
</gene>
<sequence length="47" mass="5281">MADKTLTGLTVEESEELHKHVIDGTRIFGAIAIVAHFLAYVYSPWLH</sequence>
<reference key="1">
    <citation type="journal article" date="1989" name="EMBO J.">
        <title>Multiple copies of the coding regions for the light-harvesting B800-850 alpha- and beta-polypeptides are present in the Rhodopseudomonas palustris genome.</title>
        <authorList>
            <person name="Tadros M.H."/>
            <person name="Waterkamp K."/>
        </authorList>
    </citation>
    <scope>NUCLEOTIDE SEQUENCE [GENOMIC DNA]</scope>
    <scope>PROTEIN SEQUENCE OF 2-10</scope>
    <source>
        <strain>1E5</strain>
    </source>
</reference>
<reference key="2">
    <citation type="book" date="1990" name="Current research in photosynthesis">
        <editorList>
            <person name="Baltscheffsky M."/>
        </editorList>
        <authorList>
            <person name="Brunisholz R.A."/>
            <person name="Evans M.B."/>
            <person name="Cogdell R.J."/>
            <person name="Frank G."/>
            <person name="Zuber H."/>
        </authorList>
    </citation>
    <scope>PROTEIN SEQUENCE OF 2-47</scope>
    <source>
        <strain>2.6.1 / French</strain>
    </source>
</reference>
<reference key="3">
    <citation type="journal article" date="2004" name="Nat. Biotechnol.">
        <title>Complete genome sequence of the metabolically versatile photosynthetic bacterium Rhodopseudomonas palustris.</title>
        <authorList>
            <person name="Larimer F.W."/>
            <person name="Chain P."/>
            <person name="Hauser L."/>
            <person name="Lamerdin J.E."/>
            <person name="Malfatti S."/>
            <person name="Do L."/>
            <person name="Land M.L."/>
            <person name="Pelletier D.A."/>
            <person name="Beatty J.T."/>
            <person name="Lang A.S."/>
            <person name="Tabita F.R."/>
            <person name="Gibson J.L."/>
            <person name="Hanson T.E."/>
            <person name="Bobst C."/>
            <person name="Torres y Torres J.L."/>
            <person name="Peres C."/>
            <person name="Harrison F.H."/>
            <person name="Gibson J."/>
            <person name="Harwood C.S."/>
        </authorList>
    </citation>
    <scope>NUCLEOTIDE SEQUENCE [LARGE SCALE GENOMIC DNA]</scope>
    <source>
        <strain>ATCC BAA-98 / CGA009</strain>
    </source>
</reference>
<dbReference type="EMBL" id="X64956">
    <property type="protein sequence ID" value="CAA46117.1"/>
    <property type="molecule type" value="Genomic_DNA"/>
</dbReference>
<dbReference type="EMBL" id="BX572601">
    <property type="protein sequence ID" value="CAE28095.1"/>
    <property type="molecule type" value="Genomic_DNA"/>
</dbReference>
<dbReference type="PDB" id="7ZCU">
    <property type="method" value="EM"/>
    <property type="resolution" value="2.70 A"/>
    <property type="chains" value="B/D/F/H/J/L/N/P/R=1-47"/>
</dbReference>
<dbReference type="PDBsum" id="7ZCU"/>
<dbReference type="SMR" id="P35106"/>
<dbReference type="STRING" id="258594.RPA2654"/>
<dbReference type="HOGENOM" id="CLU_199082_1_0_5"/>
<dbReference type="PhylomeDB" id="P35106"/>
<dbReference type="GO" id="GO:0005886">
    <property type="term" value="C:plasma membrane"/>
    <property type="evidence" value="ECO:0007669"/>
    <property type="project" value="UniProtKB-SubCell"/>
</dbReference>
<dbReference type="GO" id="GO:0030077">
    <property type="term" value="C:plasma membrane light-harvesting complex"/>
    <property type="evidence" value="ECO:0007669"/>
    <property type="project" value="InterPro"/>
</dbReference>
<dbReference type="GO" id="GO:0042314">
    <property type="term" value="F:bacteriochlorophyll binding"/>
    <property type="evidence" value="ECO:0007669"/>
    <property type="project" value="UniProtKB-KW"/>
</dbReference>
<dbReference type="GO" id="GO:0045156">
    <property type="term" value="F:electron transporter, transferring electrons within the cyclic electron transport pathway of photosynthesis activity"/>
    <property type="evidence" value="ECO:0007669"/>
    <property type="project" value="InterPro"/>
</dbReference>
<dbReference type="GO" id="GO:0046872">
    <property type="term" value="F:metal ion binding"/>
    <property type="evidence" value="ECO:0007669"/>
    <property type="project" value="UniProtKB-KW"/>
</dbReference>
<dbReference type="GO" id="GO:0019684">
    <property type="term" value="P:photosynthesis, light reaction"/>
    <property type="evidence" value="ECO:0007669"/>
    <property type="project" value="InterPro"/>
</dbReference>
<dbReference type="Gene3D" id="1.20.5.250">
    <property type="match status" value="1"/>
</dbReference>
<dbReference type="InterPro" id="IPR000066">
    <property type="entry name" value="Antenna_a/b"/>
</dbReference>
<dbReference type="InterPro" id="IPR023623">
    <property type="entry name" value="Antenna_beta_CS"/>
</dbReference>
<dbReference type="InterPro" id="IPR023624">
    <property type="entry name" value="Antenna_beta_dom_sf"/>
</dbReference>
<dbReference type="InterPro" id="IPR002362">
    <property type="entry name" value="LHB-1/5"/>
</dbReference>
<dbReference type="InterPro" id="IPR035889">
    <property type="entry name" value="Light-harvesting_complex"/>
</dbReference>
<dbReference type="NCBIfam" id="NF040862">
    <property type="entry name" value="pufB_517_ASD"/>
    <property type="match status" value="1"/>
</dbReference>
<dbReference type="Pfam" id="PF00556">
    <property type="entry name" value="LHC"/>
    <property type="match status" value="1"/>
</dbReference>
<dbReference type="PIRSF" id="PIRSF002900">
    <property type="entry name" value="Antenna_beta"/>
    <property type="match status" value="1"/>
</dbReference>
<dbReference type="PRINTS" id="PR00674">
    <property type="entry name" value="LIGHTHARVSTB"/>
</dbReference>
<dbReference type="SUPFAM" id="SSF56918">
    <property type="entry name" value="Light-harvesting complex subunits"/>
    <property type="match status" value="1"/>
</dbReference>
<dbReference type="PROSITE" id="PS00969">
    <property type="entry name" value="ANTENNA_COMP_BETA"/>
    <property type="match status" value="1"/>
</dbReference>
<accession>P35106</accession>
<name>LHB1_RHOPA</name>
<protein>
    <recommendedName>
        <fullName>Light-harvesting protein B-800-850 beta chain A</fullName>
    </recommendedName>
    <alternativeName>
        <fullName>Antenna pigment protein beta chain A</fullName>
    </alternativeName>
    <alternativeName>
        <fullName>LH II-A beta</fullName>
    </alternativeName>
</protein>
<comment type="function">
    <text>Antenna complexes are light-harvesting systems, which transfer the excitation energy to the reaction centers.</text>
</comment>
<comment type="subunit">
    <text>The core complex is formed by different alpha and beta chains, binding bacteriochlorophyll molecules, and arranged most probably in tetrameric structures disposed around the reaction center. The non-pigmented gamma chains may constitute additional components.</text>
</comment>
<comment type="subcellular location">
    <subcellularLocation>
        <location>Cell inner membrane</location>
        <topology>Single-pass type II membrane protein</topology>
    </subcellularLocation>
</comment>
<comment type="similarity">
    <text evidence="4">Belongs to the antenna complex beta subunit family.</text>
</comment>
<proteinExistence type="evidence at protein level"/>